<name>GATC_MYCA1</name>
<comment type="function">
    <text evidence="1">Allows the formation of correctly charged Asn-tRNA(Asn) or Gln-tRNA(Gln) through the transamidation of misacylated Asp-tRNA(Asn) or Glu-tRNA(Gln) in organisms which lack either or both of asparaginyl-tRNA or glutaminyl-tRNA synthetases. The reaction takes place in the presence of glutamine and ATP through an activated phospho-Asp-tRNA(Asn) or phospho-Glu-tRNA(Gln).</text>
</comment>
<comment type="catalytic activity">
    <reaction evidence="1">
        <text>L-glutamyl-tRNA(Gln) + L-glutamine + ATP + H2O = L-glutaminyl-tRNA(Gln) + L-glutamate + ADP + phosphate + H(+)</text>
        <dbReference type="Rhea" id="RHEA:17521"/>
        <dbReference type="Rhea" id="RHEA-COMP:9681"/>
        <dbReference type="Rhea" id="RHEA-COMP:9684"/>
        <dbReference type="ChEBI" id="CHEBI:15377"/>
        <dbReference type="ChEBI" id="CHEBI:15378"/>
        <dbReference type="ChEBI" id="CHEBI:29985"/>
        <dbReference type="ChEBI" id="CHEBI:30616"/>
        <dbReference type="ChEBI" id="CHEBI:43474"/>
        <dbReference type="ChEBI" id="CHEBI:58359"/>
        <dbReference type="ChEBI" id="CHEBI:78520"/>
        <dbReference type="ChEBI" id="CHEBI:78521"/>
        <dbReference type="ChEBI" id="CHEBI:456216"/>
    </reaction>
</comment>
<comment type="catalytic activity">
    <reaction evidence="1">
        <text>L-aspartyl-tRNA(Asn) + L-glutamine + ATP + H2O = L-asparaginyl-tRNA(Asn) + L-glutamate + ADP + phosphate + 2 H(+)</text>
        <dbReference type="Rhea" id="RHEA:14513"/>
        <dbReference type="Rhea" id="RHEA-COMP:9674"/>
        <dbReference type="Rhea" id="RHEA-COMP:9677"/>
        <dbReference type="ChEBI" id="CHEBI:15377"/>
        <dbReference type="ChEBI" id="CHEBI:15378"/>
        <dbReference type="ChEBI" id="CHEBI:29985"/>
        <dbReference type="ChEBI" id="CHEBI:30616"/>
        <dbReference type="ChEBI" id="CHEBI:43474"/>
        <dbReference type="ChEBI" id="CHEBI:58359"/>
        <dbReference type="ChEBI" id="CHEBI:78515"/>
        <dbReference type="ChEBI" id="CHEBI:78516"/>
        <dbReference type="ChEBI" id="CHEBI:456216"/>
    </reaction>
</comment>
<comment type="subunit">
    <text evidence="1">Heterotrimer of A, B and C subunits.</text>
</comment>
<comment type="similarity">
    <text evidence="1">Belongs to the GatC family.</text>
</comment>
<sequence length="98" mass="10506">MSQISRDEVAHLARLSRLALTDAELDSFAGQLDAILTHVSQVQAVDVTGVEPTDNPLKDLNVTRPDEPMPCLTQAEALAEAPEAVDGRFAVPQILGDE</sequence>
<accession>A0QJD5</accession>
<reference key="1">
    <citation type="submission" date="2006-10" db="EMBL/GenBank/DDBJ databases">
        <authorList>
            <person name="Fleischmann R.D."/>
            <person name="Dodson R.J."/>
            <person name="Haft D.H."/>
            <person name="Merkel J.S."/>
            <person name="Nelson W.C."/>
            <person name="Fraser C.M."/>
        </authorList>
    </citation>
    <scope>NUCLEOTIDE SEQUENCE [LARGE SCALE GENOMIC DNA]</scope>
    <source>
        <strain>104</strain>
    </source>
</reference>
<dbReference type="EC" id="6.3.5.-" evidence="1"/>
<dbReference type="EMBL" id="CP000479">
    <property type="protein sequence ID" value="ABK65468.1"/>
    <property type="molecule type" value="Genomic_DNA"/>
</dbReference>
<dbReference type="RefSeq" id="WP_003874995.1">
    <property type="nucleotide sequence ID" value="NC_008595.1"/>
</dbReference>
<dbReference type="SMR" id="A0QJD5"/>
<dbReference type="GeneID" id="75271260"/>
<dbReference type="KEGG" id="mav:MAV_3860"/>
<dbReference type="HOGENOM" id="CLU_105899_1_0_11"/>
<dbReference type="Proteomes" id="UP000001574">
    <property type="component" value="Chromosome"/>
</dbReference>
<dbReference type="GO" id="GO:0050566">
    <property type="term" value="F:asparaginyl-tRNA synthase (glutamine-hydrolyzing) activity"/>
    <property type="evidence" value="ECO:0007669"/>
    <property type="project" value="RHEA"/>
</dbReference>
<dbReference type="GO" id="GO:0005524">
    <property type="term" value="F:ATP binding"/>
    <property type="evidence" value="ECO:0007669"/>
    <property type="project" value="UniProtKB-KW"/>
</dbReference>
<dbReference type="GO" id="GO:0050567">
    <property type="term" value="F:glutaminyl-tRNA synthase (glutamine-hydrolyzing) activity"/>
    <property type="evidence" value="ECO:0007669"/>
    <property type="project" value="UniProtKB-UniRule"/>
</dbReference>
<dbReference type="GO" id="GO:0070681">
    <property type="term" value="P:glutaminyl-tRNAGln biosynthesis via transamidation"/>
    <property type="evidence" value="ECO:0007669"/>
    <property type="project" value="TreeGrafter"/>
</dbReference>
<dbReference type="GO" id="GO:0006450">
    <property type="term" value="P:regulation of translational fidelity"/>
    <property type="evidence" value="ECO:0007669"/>
    <property type="project" value="InterPro"/>
</dbReference>
<dbReference type="GO" id="GO:0006412">
    <property type="term" value="P:translation"/>
    <property type="evidence" value="ECO:0007669"/>
    <property type="project" value="UniProtKB-UniRule"/>
</dbReference>
<dbReference type="Gene3D" id="1.10.20.60">
    <property type="entry name" value="Glu-tRNAGln amidotransferase C subunit, N-terminal domain"/>
    <property type="match status" value="1"/>
</dbReference>
<dbReference type="HAMAP" id="MF_00122">
    <property type="entry name" value="GatC"/>
    <property type="match status" value="1"/>
</dbReference>
<dbReference type="InterPro" id="IPR036113">
    <property type="entry name" value="Asp/Glu-ADT_sf_sub_c"/>
</dbReference>
<dbReference type="InterPro" id="IPR003837">
    <property type="entry name" value="GatC"/>
</dbReference>
<dbReference type="NCBIfam" id="TIGR00135">
    <property type="entry name" value="gatC"/>
    <property type="match status" value="1"/>
</dbReference>
<dbReference type="PANTHER" id="PTHR15004">
    <property type="entry name" value="GLUTAMYL-TRNA(GLN) AMIDOTRANSFERASE SUBUNIT C, MITOCHONDRIAL"/>
    <property type="match status" value="1"/>
</dbReference>
<dbReference type="PANTHER" id="PTHR15004:SF0">
    <property type="entry name" value="GLUTAMYL-TRNA(GLN) AMIDOTRANSFERASE SUBUNIT C, MITOCHONDRIAL"/>
    <property type="match status" value="1"/>
</dbReference>
<dbReference type="Pfam" id="PF02686">
    <property type="entry name" value="GatC"/>
    <property type="match status" value="1"/>
</dbReference>
<dbReference type="SUPFAM" id="SSF141000">
    <property type="entry name" value="Glu-tRNAGln amidotransferase C subunit"/>
    <property type="match status" value="1"/>
</dbReference>
<feature type="chain" id="PRO_1000016149" description="Aspartyl/glutamyl-tRNA(Asn/Gln) amidotransferase subunit C">
    <location>
        <begin position="1"/>
        <end position="98"/>
    </location>
</feature>
<organism>
    <name type="scientific">Mycobacterium avium (strain 104)</name>
    <dbReference type="NCBI Taxonomy" id="243243"/>
    <lineage>
        <taxon>Bacteria</taxon>
        <taxon>Bacillati</taxon>
        <taxon>Actinomycetota</taxon>
        <taxon>Actinomycetes</taxon>
        <taxon>Mycobacteriales</taxon>
        <taxon>Mycobacteriaceae</taxon>
        <taxon>Mycobacterium</taxon>
        <taxon>Mycobacterium avium complex (MAC)</taxon>
    </lineage>
</organism>
<keyword id="KW-0067">ATP-binding</keyword>
<keyword id="KW-0436">Ligase</keyword>
<keyword id="KW-0547">Nucleotide-binding</keyword>
<keyword id="KW-0648">Protein biosynthesis</keyword>
<gene>
    <name evidence="1" type="primary">gatC</name>
    <name type="ordered locus">MAV_3860</name>
</gene>
<proteinExistence type="inferred from homology"/>
<evidence type="ECO:0000255" key="1">
    <source>
        <dbReference type="HAMAP-Rule" id="MF_00122"/>
    </source>
</evidence>
<protein>
    <recommendedName>
        <fullName evidence="1">Aspartyl/glutamyl-tRNA(Asn/Gln) amidotransferase subunit C</fullName>
        <shortName evidence="1">Asp/Glu-ADT subunit C</shortName>
        <ecNumber evidence="1">6.3.5.-</ecNumber>
    </recommendedName>
</protein>